<reference key="1">
    <citation type="journal article" date="2003" name="Mol. Microbiol.">
        <title>Genome-based analysis of virulence genes in a non-biofilm-forming Staphylococcus epidermidis strain (ATCC 12228).</title>
        <authorList>
            <person name="Zhang Y.-Q."/>
            <person name="Ren S.-X."/>
            <person name="Li H.-L."/>
            <person name="Wang Y.-X."/>
            <person name="Fu G."/>
            <person name="Yang J."/>
            <person name="Qin Z.-Q."/>
            <person name="Miao Y.-G."/>
            <person name="Wang W.-Y."/>
            <person name="Chen R.-S."/>
            <person name="Shen Y."/>
            <person name="Chen Z."/>
            <person name="Yuan Z.-H."/>
            <person name="Zhao G.-P."/>
            <person name="Qu D."/>
            <person name="Danchin A."/>
            <person name="Wen Y.-M."/>
        </authorList>
    </citation>
    <scope>NUCLEOTIDE SEQUENCE [LARGE SCALE GENOMIC DNA]</scope>
    <source>
        <strain>ATCC 12228 / FDA PCI 1200</strain>
    </source>
</reference>
<accession>Q8CTR9</accession>
<comment type="function">
    <text evidence="1">Catalyzes the reductive cleavage of azo bond in aromatic azo compounds to the corresponding amines. Requires NADPH, but not NADH, as an electron donor for its activity (By similarity).</text>
</comment>
<comment type="cofactor">
    <cofactor evidence="1">
        <name>FMN</name>
        <dbReference type="ChEBI" id="CHEBI:58210"/>
    </cofactor>
</comment>
<comment type="subunit">
    <text evidence="1">Homotetramer.</text>
</comment>
<comment type="similarity">
    <text evidence="2">Belongs to the azoreductase type 2 family.</text>
</comment>
<proteinExistence type="inferred from homology"/>
<keyword id="KW-0285">Flavoprotein</keyword>
<keyword id="KW-0288">FMN</keyword>
<keyword id="KW-0521">NADP</keyword>
<keyword id="KW-0560">Oxidoreductase</keyword>
<sequence length="188" mass="20730">MKGLIIIGSAQVGSHTNALSKYLKGQLGEHDVEVEIFDLAEKPIHQLDFAGTTQAVDEIKNNVKSLQNKAMEADFLILGTPNYHGSFSGILKNALDHLNMDHFKMKPVGLICNSGGIVSSEPLSHLRVIVRSLLGIAVPTQIATHDSDYAKLEDGTLYLEDNEFQLRSKLFVDQIVSFVTNSPYEHLK</sequence>
<name>AZO1_STAES</name>
<dbReference type="EC" id="1.7.-.-"/>
<dbReference type="EMBL" id="AE015929">
    <property type="protein sequence ID" value="AAO03927.1"/>
    <property type="molecule type" value="Genomic_DNA"/>
</dbReference>
<dbReference type="RefSeq" id="NP_763885.1">
    <property type="nucleotide sequence ID" value="NC_004461.1"/>
</dbReference>
<dbReference type="RefSeq" id="WP_001832301.1">
    <property type="nucleotide sequence ID" value="NZ_WBME01000014.1"/>
</dbReference>
<dbReference type="SMR" id="Q8CTR9"/>
<dbReference type="KEGG" id="sep:SE_0330"/>
<dbReference type="PATRIC" id="fig|176280.10.peg.304"/>
<dbReference type="eggNOG" id="COG0431">
    <property type="taxonomic scope" value="Bacteria"/>
</dbReference>
<dbReference type="HOGENOM" id="CLU_055322_1_2_9"/>
<dbReference type="OrthoDB" id="9790975at2"/>
<dbReference type="Proteomes" id="UP000001411">
    <property type="component" value="Chromosome"/>
</dbReference>
<dbReference type="GO" id="GO:0005829">
    <property type="term" value="C:cytosol"/>
    <property type="evidence" value="ECO:0007669"/>
    <property type="project" value="TreeGrafter"/>
</dbReference>
<dbReference type="GO" id="GO:0010181">
    <property type="term" value="F:FMN binding"/>
    <property type="evidence" value="ECO:0007669"/>
    <property type="project" value="TreeGrafter"/>
</dbReference>
<dbReference type="GO" id="GO:0016491">
    <property type="term" value="F:oxidoreductase activity"/>
    <property type="evidence" value="ECO:0007669"/>
    <property type="project" value="UniProtKB-KW"/>
</dbReference>
<dbReference type="Gene3D" id="3.40.50.360">
    <property type="match status" value="1"/>
</dbReference>
<dbReference type="InterPro" id="IPR029039">
    <property type="entry name" value="Flavoprotein-like_sf"/>
</dbReference>
<dbReference type="InterPro" id="IPR005025">
    <property type="entry name" value="FMN_Rdtase-like_dom"/>
</dbReference>
<dbReference type="InterPro" id="IPR050712">
    <property type="entry name" value="NAD(P)H-dep_reductase"/>
</dbReference>
<dbReference type="PANTHER" id="PTHR30543">
    <property type="entry name" value="CHROMATE REDUCTASE"/>
    <property type="match status" value="1"/>
</dbReference>
<dbReference type="PANTHER" id="PTHR30543:SF21">
    <property type="entry name" value="NAD(P)H-DEPENDENT FMN REDUCTASE LOT6"/>
    <property type="match status" value="1"/>
</dbReference>
<dbReference type="Pfam" id="PF03358">
    <property type="entry name" value="FMN_red"/>
    <property type="match status" value="1"/>
</dbReference>
<dbReference type="SUPFAM" id="SSF52218">
    <property type="entry name" value="Flavoproteins"/>
    <property type="match status" value="1"/>
</dbReference>
<evidence type="ECO:0000250" key="1"/>
<evidence type="ECO:0000305" key="2"/>
<gene>
    <name type="primary">azo1</name>
    <name type="ordered locus">SE_0330</name>
</gene>
<feature type="chain" id="PRO_0000245998" description="FMN-dependent NADPH-azoreductase">
    <location>
        <begin position="1"/>
        <end position="188"/>
    </location>
</feature>
<organism>
    <name type="scientific">Staphylococcus epidermidis (strain ATCC 12228 / FDA PCI 1200)</name>
    <dbReference type="NCBI Taxonomy" id="176280"/>
    <lineage>
        <taxon>Bacteria</taxon>
        <taxon>Bacillati</taxon>
        <taxon>Bacillota</taxon>
        <taxon>Bacilli</taxon>
        <taxon>Bacillales</taxon>
        <taxon>Staphylococcaceae</taxon>
        <taxon>Staphylococcus</taxon>
    </lineage>
</organism>
<protein>
    <recommendedName>
        <fullName>FMN-dependent NADPH-azoreductase</fullName>
        <ecNumber>1.7.-.-</ecNumber>
    </recommendedName>
    <alternativeName>
        <fullName>NADPH-dependent flavo-azoreductase</fullName>
    </alternativeName>
    <alternativeName>
        <fullName>NADPH-flavin azoreductase</fullName>
    </alternativeName>
</protein>